<reference key="1">
    <citation type="journal article" date="2006" name="Science">
        <title>Genomic islands and the ecology and evolution of Prochlorococcus.</title>
        <authorList>
            <person name="Coleman M.L."/>
            <person name="Sullivan M.B."/>
            <person name="Martiny A.C."/>
            <person name="Steglich C."/>
            <person name="Barry K."/>
            <person name="Delong E.F."/>
            <person name="Chisholm S.W."/>
        </authorList>
    </citation>
    <scope>NUCLEOTIDE SEQUENCE [LARGE SCALE GENOMIC DNA]</scope>
    <source>
        <strain>MIT 9312</strain>
    </source>
</reference>
<organism>
    <name type="scientific">Prochlorococcus marinus (strain MIT 9312)</name>
    <dbReference type="NCBI Taxonomy" id="74546"/>
    <lineage>
        <taxon>Bacteria</taxon>
        <taxon>Bacillati</taxon>
        <taxon>Cyanobacteriota</taxon>
        <taxon>Cyanophyceae</taxon>
        <taxon>Synechococcales</taxon>
        <taxon>Prochlorococcaceae</taxon>
        <taxon>Prochlorococcus</taxon>
    </lineage>
</organism>
<protein>
    <recommendedName>
        <fullName evidence="1">NAD(P)H-quinone oxidoreductase subunit I</fullName>
        <ecNumber evidence="1">7.1.1.-</ecNumber>
    </recommendedName>
    <alternativeName>
        <fullName evidence="1">NAD(P)H dehydrogenase I subunit I</fullName>
    </alternativeName>
    <alternativeName>
        <fullName evidence="1">NDH-1 subunit I</fullName>
        <shortName evidence="1">NDH-I</shortName>
    </alternativeName>
</protein>
<name>NDHI_PROM9</name>
<gene>
    <name evidence="1" type="primary">ndhI</name>
    <name type="ordered locus">PMT9312_0161</name>
</gene>
<evidence type="ECO:0000255" key="1">
    <source>
        <dbReference type="HAMAP-Rule" id="MF_01351"/>
    </source>
</evidence>
<keyword id="KW-0004">4Fe-4S</keyword>
<keyword id="KW-0408">Iron</keyword>
<keyword id="KW-0411">Iron-sulfur</keyword>
<keyword id="KW-0472">Membrane</keyword>
<keyword id="KW-0479">Metal-binding</keyword>
<keyword id="KW-0520">NAD</keyword>
<keyword id="KW-0521">NADP</keyword>
<keyword id="KW-0618">Plastoquinone</keyword>
<keyword id="KW-0874">Quinone</keyword>
<keyword id="KW-0677">Repeat</keyword>
<keyword id="KW-0793">Thylakoid</keyword>
<keyword id="KW-1278">Translocase</keyword>
<feature type="chain" id="PRO_0000245682" description="NAD(P)H-quinone oxidoreductase subunit I">
    <location>
        <begin position="1"/>
        <end position="208"/>
    </location>
</feature>
<feature type="domain" description="4Fe-4S ferredoxin-type 1" evidence="1">
    <location>
        <begin position="55"/>
        <end position="84"/>
    </location>
</feature>
<feature type="domain" description="4Fe-4S ferredoxin-type 2" evidence="1">
    <location>
        <begin position="95"/>
        <end position="124"/>
    </location>
</feature>
<feature type="binding site" evidence="1">
    <location>
        <position position="64"/>
    </location>
    <ligand>
        <name>[4Fe-4S] cluster</name>
        <dbReference type="ChEBI" id="CHEBI:49883"/>
        <label>1</label>
    </ligand>
</feature>
<feature type="binding site" evidence="1">
    <location>
        <position position="67"/>
    </location>
    <ligand>
        <name>[4Fe-4S] cluster</name>
        <dbReference type="ChEBI" id="CHEBI:49883"/>
        <label>1</label>
    </ligand>
</feature>
<feature type="binding site" evidence="1">
    <location>
        <position position="70"/>
    </location>
    <ligand>
        <name>[4Fe-4S] cluster</name>
        <dbReference type="ChEBI" id="CHEBI:49883"/>
        <label>1</label>
    </ligand>
</feature>
<feature type="binding site" evidence="1">
    <location>
        <position position="74"/>
    </location>
    <ligand>
        <name>[4Fe-4S] cluster</name>
        <dbReference type="ChEBI" id="CHEBI:49883"/>
        <label>2</label>
    </ligand>
</feature>
<feature type="binding site" evidence="1">
    <location>
        <position position="104"/>
    </location>
    <ligand>
        <name>[4Fe-4S] cluster</name>
        <dbReference type="ChEBI" id="CHEBI:49883"/>
        <label>2</label>
    </ligand>
</feature>
<feature type="binding site" evidence="1">
    <location>
        <position position="107"/>
    </location>
    <ligand>
        <name>[4Fe-4S] cluster</name>
        <dbReference type="ChEBI" id="CHEBI:49883"/>
        <label>2</label>
    </ligand>
</feature>
<feature type="binding site" evidence="1">
    <location>
        <position position="110"/>
    </location>
    <ligand>
        <name>[4Fe-4S] cluster</name>
        <dbReference type="ChEBI" id="CHEBI:49883"/>
        <label>2</label>
    </ligand>
</feature>
<feature type="binding site" evidence="1">
    <location>
        <position position="114"/>
    </location>
    <ligand>
        <name>[4Fe-4S] cluster</name>
        <dbReference type="ChEBI" id="CHEBI:49883"/>
        <label>1</label>
    </ligand>
</feature>
<accession>Q31D22</accession>
<comment type="function">
    <text evidence="1">NDH-1 shuttles electrons from an unknown electron donor, via FMN and iron-sulfur (Fe-S) centers, to quinones in the respiratory and/or the photosynthetic chain. The immediate electron acceptor for the enzyme in this species is believed to be plastoquinone. Couples the redox reaction to proton translocation, and thus conserves the redox energy in a proton gradient.</text>
</comment>
<comment type="catalytic activity">
    <reaction evidence="1">
        <text>a plastoquinone + NADH + (n+1) H(+)(in) = a plastoquinol + NAD(+) + n H(+)(out)</text>
        <dbReference type="Rhea" id="RHEA:42608"/>
        <dbReference type="Rhea" id="RHEA-COMP:9561"/>
        <dbReference type="Rhea" id="RHEA-COMP:9562"/>
        <dbReference type="ChEBI" id="CHEBI:15378"/>
        <dbReference type="ChEBI" id="CHEBI:17757"/>
        <dbReference type="ChEBI" id="CHEBI:57540"/>
        <dbReference type="ChEBI" id="CHEBI:57945"/>
        <dbReference type="ChEBI" id="CHEBI:62192"/>
    </reaction>
</comment>
<comment type="catalytic activity">
    <reaction evidence="1">
        <text>a plastoquinone + NADPH + (n+1) H(+)(in) = a plastoquinol + NADP(+) + n H(+)(out)</text>
        <dbReference type="Rhea" id="RHEA:42612"/>
        <dbReference type="Rhea" id="RHEA-COMP:9561"/>
        <dbReference type="Rhea" id="RHEA-COMP:9562"/>
        <dbReference type="ChEBI" id="CHEBI:15378"/>
        <dbReference type="ChEBI" id="CHEBI:17757"/>
        <dbReference type="ChEBI" id="CHEBI:57783"/>
        <dbReference type="ChEBI" id="CHEBI:58349"/>
        <dbReference type="ChEBI" id="CHEBI:62192"/>
    </reaction>
</comment>
<comment type="cofactor">
    <cofactor evidence="1">
        <name>[4Fe-4S] cluster</name>
        <dbReference type="ChEBI" id="CHEBI:49883"/>
    </cofactor>
    <text evidence="1">Binds 2 [4Fe-4S] clusters per subunit.</text>
</comment>
<comment type="subunit">
    <text evidence="1">NDH-1 is composed of at least 11 different subunits.</text>
</comment>
<comment type="subcellular location">
    <subcellularLocation>
        <location evidence="1">Cellular thylakoid membrane</location>
        <topology evidence="1">Peripheral membrane protein</topology>
    </subcellularLocation>
</comment>
<comment type="similarity">
    <text evidence="1">Belongs to the complex I 23 kDa subunit family.</text>
</comment>
<sequence>MKNFLQQINSYIKEAFNAGKYLYNGLSVTFDHLRRRPVTVQYPYEKLIPSERYRGRIHYEFDKCIACEVCVRVCPINLPVVDWVMNKETKKKELRNYSIDFGVCIFCGNCVEYCPTNCLSMTEEYELATFDRHNLNFDNVALGRLPTNVTTDPSIKPLRELAYLPKGVMDPHEIPASDIRVGKLPEEVYDWMRPTSNENKDKISNSNN</sequence>
<dbReference type="EC" id="7.1.1.-" evidence="1"/>
<dbReference type="EMBL" id="CP000111">
    <property type="protein sequence ID" value="ABB49223.1"/>
    <property type="molecule type" value="Genomic_DNA"/>
</dbReference>
<dbReference type="RefSeq" id="WP_011375727.1">
    <property type="nucleotide sequence ID" value="NC_007577.1"/>
</dbReference>
<dbReference type="SMR" id="Q31D22"/>
<dbReference type="STRING" id="74546.PMT9312_0161"/>
<dbReference type="KEGG" id="pmi:PMT9312_0161"/>
<dbReference type="eggNOG" id="COG1143">
    <property type="taxonomic scope" value="Bacteria"/>
</dbReference>
<dbReference type="HOGENOM" id="CLU_122804_0_0_3"/>
<dbReference type="OrthoDB" id="9798098at2"/>
<dbReference type="Proteomes" id="UP000002715">
    <property type="component" value="Chromosome"/>
</dbReference>
<dbReference type="GO" id="GO:0031676">
    <property type="term" value="C:plasma membrane-derived thylakoid membrane"/>
    <property type="evidence" value="ECO:0007669"/>
    <property type="project" value="UniProtKB-SubCell"/>
</dbReference>
<dbReference type="GO" id="GO:0051539">
    <property type="term" value="F:4 iron, 4 sulfur cluster binding"/>
    <property type="evidence" value="ECO:0007669"/>
    <property type="project" value="UniProtKB-KW"/>
</dbReference>
<dbReference type="GO" id="GO:0005506">
    <property type="term" value="F:iron ion binding"/>
    <property type="evidence" value="ECO:0007669"/>
    <property type="project" value="UniProtKB-UniRule"/>
</dbReference>
<dbReference type="GO" id="GO:0008137">
    <property type="term" value="F:NADH dehydrogenase (ubiquinone) activity"/>
    <property type="evidence" value="ECO:0007669"/>
    <property type="project" value="InterPro"/>
</dbReference>
<dbReference type="GO" id="GO:0048038">
    <property type="term" value="F:quinone binding"/>
    <property type="evidence" value="ECO:0007669"/>
    <property type="project" value="UniProtKB-KW"/>
</dbReference>
<dbReference type="GO" id="GO:0019684">
    <property type="term" value="P:photosynthesis, light reaction"/>
    <property type="evidence" value="ECO:0007669"/>
    <property type="project" value="UniProtKB-UniRule"/>
</dbReference>
<dbReference type="Gene3D" id="3.30.70.3270">
    <property type="match status" value="1"/>
</dbReference>
<dbReference type="HAMAP" id="MF_01351">
    <property type="entry name" value="NDH1_NuoI"/>
    <property type="match status" value="1"/>
</dbReference>
<dbReference type="InterPro" id="IPR017896">
    <property type="entry name" value="4Fe4S_Fe-S-bd"/>
</dbReference>
<dbReference type="InterPro" id="IPR017900">
    <property type="entry name" value="4Fe4S_Fe_S_CS"/>
</dbReference>
<dbReference type="InterPro" id="IPR010226">
    <property type="entry name" value="NADH_quinone_OxRdtase_chainI"/>
</dbReference>
<dbReference type="InterPro" id="IPR004497">
    <property type="entry name" value="NDHI"/>
</dbReference>
<dbReference type="NCBIfam" id="TIGR00403">
    <property type="entry name" value="ndhI"/>
    <property type="match status" value="1"/>
</dbReference>
<dbReference type="NCBIfam" id="TIGR01971">
    <property type="entry name" value="NuoI"/>
    <property type="match status" value="1"/>
</dbReference>
<dbReference type="NCBIfam" id="NF004537">
    <property type="entry name" value="PRK05888.1-3"/>
    <property type="match status" value="1"/>
</dbReference>
<dbReference type="PANTHER" id="PTHR47275">
    <property type="entry name" value="NAD(P)H-QUINONE OXIDOREDUCTASE SUBUNIT I, CHLOROPLASTIC"/>
    <property type="match status" value="1"/>
</dbReference>
<dbReference type="PANTHER" id="PTHR47275:SF1">
    <property type="entry name" value="NAD(P)H-QUINONE OXIDOREDUCTASE SUBUNIT I, CHLOROPLASTIC"/>
    <property type="match status" value="1"/>
</dbReference>
<dbReference type="Pfam" id="PF12838">
    <property type="entry name" value="Fer4_7"/>
    <property type="match status" value="1"/>
</dbReference>
<dbReference type="SUPFAM" id="SSF54862">
    <property type="entry name" value="4Fe-4S ferredoxins"/>
    <property type="match status" value="1"/>
</dbReference>
<dbReference type="PROSITE" id="PS00198">
    <property type="entry name" value="4FE4S_FER_1"/>
    <property type="match status" value="2"/>
</dbReference>
<dbReference type="PROSITE" id="PS51379">
    <property type="entry name" value="4FE4S_FER_2"/>
    <property type="match status" value="2"/>
</dbReference>
<proteinExistence type="inferred from homology"/>